<organism>
    <name type="scientific">Physcomitrium patens</name>
    <name type="common">Spreading-leaved earth moss</name>
    <name type="synonym">Physcomitrella patens</name>
    <dbReference type="NCBI Taxonomy" id="3218"/>
    <lineage>
        <taxon>Eukaryota</taxon>
        <taxon>Viridiplantae</taxon>
        <taxon>Streptophyta</taxon>
        <taxon>Embryophyta</taxon>
        <taxon>Bryophyta</taxon>
        <taxon>Bryophytina</taxon>
        <taxon>Bryopsida</taxon>
        <taxon>Funariidae</taxon>
        <taxon>Funariales</taxon>
        <taxon>Funariaceae</taxon>
        <taxon>Physcomitrium</taxon>
    </lineage>
</organism>
<reference key="1">
    <citation type="submission" date="1999-04" db="EMBL/GenBank/DDBJ databases">
        <title>Three cDNA sequences for light inducible genes from Physcomitrella patens.</title>
        <authorList>
            <person name="Kiyosue T."/>
            <person name="Wada M."/>
        </authorList>
    </citation>
    <scope>NUCLEOTIDE SEQUENCE [MRNA]</scope>
</reference>
<reference key="2">
    <citation type="journal article" date="2008" name="Science">
        <title>The Physcomitrella genome reveals evolutionary insights into the conquest of land by plants.</title>
        <authorList>
            <person name="Rensing S.A."/>
            <person name="Lang D."/>
            <person name="Zimmer A.D."/>
            <person name="Terry A."/>
            <person name="Salamov A."/>
            <person name="Shapiro H."/>
            <person name="Nishiyama T."/>
            <person name="Perroud P.-F."/>
            <person name="Lindquist E.A."/>
            <person name="Kamisugi Y."/>
            <person name="Tanahashi T."/>
            <person name="Sakakibara K."/>
            <person name="Fujita T."/>
            <person name="Oishi K."/>
            <person name="Shin-I T."/>
            <person name="Kuroki Y."/>
            <person name="Toyoda A."/>
            <person name="Suzuki Y."/>
            <person name="Hashimoto S.-I."/>
            <person name="Yamaguchi K."/>
            <person name="Sugano S."/>
            <person name="Kohara Y."/>
            <person name="Fujiyama A."/>
            <person name="Anterola A."/>
            <person name="Aoki S."/>
            <person name="Ashton N."/>
            <person name="Barbazuk W.B."/>
            <person name="Barker E."/>
            <person name="Bennetzen J.L."/>
            <person name="Blankenship R."/>
            <person name="Cho S.H."/>
            <person name="Dutcher S.K."/>
            <person name="Estelle M."/>
            <person name="Fawcett J.A."/>
            <person name="Gundlach H."/>
            <person name="Hanada K."/>
            <person name="Heyl A."/>
            <person name="Hicks K.A."/>
            <person name="Hughes J."/>
            <person name="Lohr M."/>
            <person name="Mayer K."/>
            <person name="Melkozernov A."/>
            <person name="Murata T."/>
            <person name="Nelson D.R."/>
            <person name="Pils B."/>
            <person name="Prigge M."/>
            <person name="Reiss B."/>
            <person name="Renner T."/>
            <person name="Rombauts S."/>
            <person name="Rushton P.J."/>
            <person name="Sanderfoot A."/>
            <person name="Schween G."/>
            <person name="Shiu S.-H."/>
            <person name="Stueber K."/>
            <person name="Theodoulou F.L."/>
            <person name="Tu H."/>
            <person name="Van de Peer Y."/>
            <person name="Verrier P.J."/>
            <person name="Waters E."/>
            <person name="Wood A."/>
            <person name="Yang L."/>
            <person name="Cove D."/>
            <person name="Cuming A.C."/>
            <person name="Hasebe M."/>
            <person name="Lucas S."/>
            <person name="Mishler B.D."/>
            <person name="Reski R."/>
            <person name="Grigoriev I.V."/>
            <person name="Quatrano R.S."/>
            <person name="Boore J.L."/>
        </authorList>
    </citation>
    <scope>NUCLEOTIDE SEQUENCE [LARGE SCALE GENOMIC DNA]</scope>
    <source>
        <strain>cv. Gransden 2004</strain>
    </source>
</reference>
<evidence type="ECO:0000250" key="1"/>
<evidence type="ECO:0000250" key="2">
    <source>
        <dbReference type="UniProtKB" id="P18068"/>
    </source>
</evidence>
<evidence type="ECO:0000305" key="3"/>
<name>PLAS_PHYPA</name>
<feature type="transit peptide" description="Chloroplast" evidence="1">
    <location>
        <begin position="1"/>
        <end position="70"/>
    </location>
</feature>
<feature type="chain" id="PRO_0000002892" description="Plastocyanin, chloroplastic">
    <location>
        <begin position="71"/>
        <end position="168"/>
    </location>
</feature>
<feature type="domain" description="Plastocyanin-like">
    <location>
        <begin position="71"/>
        <end position="168"/>
    </location>
</feature>
<feature type="binding site" evidence="2">
    <location>
        <position position="108"/>
    </location>
    <ligand>
        <name>Cu cation</name>
        <dbReference type="ChEBI" id="CHEBI:23378"/>
    </ligand>
</feature>
<feature type="binding site" evidence="2">
    <location>
        <position position="153"/>
    </location>
    <ligand>
        <name>Cu cation</name>
        <dbReference type="ChEBI" id="CHEBI:23378"/>
    </ligand>
</feature>
<feature type="binding site" evidence="2">
    <location>
        <position position="156"/>
    </location>
    <ligand>
        <name>Cu cation</name>
        <dbReference type="ChEBI" id="CHEBI:23378"/>
    </ligand>
</feature>
<feature type="binding site" evidence="2">
    <location>
        <position position="161"/>
    </location>
    <ligand>
        <name>Cu cation</name>
        <dbReference type="ChEBI" id="CHEBI:23378"/>
    </ligand>
</feature>
<feature type="sequence conflict" description="In Ref. 1; BAA77274." evidence="3" ref="1">
    <original>P</original>
    <variation>S</variation>
    <location>
        <position position="12"/>
    </location>
</feature>
<comment type="function">
    <text evidence="2">Participates in electron transfer between P700 and the cytochrome b6-f complex in photosystem I.</text>
</comment>
<comment type="cofactor">
    <cofactor evidence="2">
        <name>Cu(2+)</name>
        <dbReference type="ChEBI" id="CHEBI:29036"/>
    </cofactor>
</comment>
<comment type="subcellular location">
    <subcellularLocation>
        <location evidence="2">Plastid</location>
        <location evidence="2">Chloroplast thylakoid membrane</location>
        <topology evidence="2">Peripheral membrane protein</topology>
        <orientation evidence="2">Lumenal side</orientation>
    </subcellularLocation>
    <text>Loosely bound to the inner thylakoid membrane surface in chloroplasts (By similarity).</text>
</comment>
<comment type="similarity">
    <text evidence="3">Belongs to the plastocyanin family.</text>
</comment>
<proteinExistence type="evidence at transcript level"/>
<gene>
    <name type="primary">PETE</name>
    <name type="ORF">PHYPADRAFT_170637</name>
</gene>
<accession>Q9SXW9</accession>
<accession>A9TKV7</accession>
<protein>
    <recommendedName>
        <fullName>Plastocyanin, chloroplastic</fullName>
    </recommendedName>
</protein>
<dbReference type="EMBL" id="AB026687">
    <property type="protein sequence ID" value="BAA77274.1"/>
    <property type="molecule type" value="mRNA"/>
</dbReference>
<dbReference type="EMBL" id="DS545143">
    <property type="protein sequence ID" value="EDQ55946.1"/>
    <property type="molecule type" value="Genomic_DNA"/>
</dbReference>
<dbReference type="RefSeq" id="XP_001779258.1">
    <property type="nucleotide sequence ID" value="XM_001779206.1"/>
</dbReference>
<dbReference type="SMR" id="Q9SXW9"/>
<dbReference type="FunCoup" id="Q9SXW9">
    <property type="interactions" value="1654"/>
</dbReference>
<dbReference type="PaxDb" id="3218-PP1S254_25V6.1"/>
<dbReference type="EnsemblPlants" id="Pp3c19_21160V3.1">
    <property type="protein sequence ID" value="PAC:32939379.CDS.1"/>
    <property type="gene ID" value="Pp3c19_21160"/>
</dbReference>
<dbReference type="EnsemblPlants" id="Pp3c19_21160V3.2">
    <property type="protein sequence ID" value="PAC:32939380.CDS.1"/>
    <property type="gene ID" value="Pp3c19_21160"/>
</dbReference>
<dbReference type="Gramene" id="Pp3c19_21160V3.1">
    <property type="protein sequence ID" value="PAC:32939379.CDS.1"/>
    <property type="gene ID" value="Pp3c19_21160"/>
</dbReference>
<dbReference type="Gramene" id="Pp3c19_21160V3.2">
    <property type="protein sequence ID" value="PAC:32939380.CDS.1"/>
    <property type="gene ID" value="Pp3c19_21160"/>
</dbReference>
<dbReference type="eggNOG" id="ENOG502RXIY">
    <property type="taxonomic scope" value="Eukaryota"/>
</dbReference>
<dbReference type="HOGENOM" id="CLU_084115_0_0_1"/>
<dbReference type="InParanoid" id="Q9SXW9"/>
<dbReference type="OMA" id="YDYYCEP"/>
<dbReference type="OrthoDB" id="197281at2759"/>
<dbReference type="Proteomes" id="UP000006727">
    <property type="component" value="Chromosome 19"/>
</dbReference>
<dbReference type="GO" id="GO:0009535">
    <property type="term" value="C:chloroplast thylakoid membrane"/>
    <property type="evidence" value="ECO:0007669"/>
    <property type="project" value="UniProtKB-SubCell"/>
</dbReference>
<dbReference type="GO" id="GO:0005507">
    <property type="term" value="F:copper ion binding"/>
    <property type="evidence" value="ECO:0007669"/>
    <property type="project" value="InterPro"/>
</dbReference>
<dbReference type="GO" id="GO:0009055">
    <property type="term" value="F:electron transfer activity"/>
    <property type="evidence" value="ECO:0007669"/>
    <property type="project" value="InterPro"/>
</dbReference>
<dbReference type="CDD" id="cd04219">
    <property type="entry name" value="Plastocyanin"/>
    <property type="match status" value="1"/>
</dbReference>
<dbReference type="Gene3D" id="2.60.40.420">
    <property type="entry name" value="Cupredoxins - blue copper proteins"/>
    <property type="match status" value="1"/>
</dbReference>
<dbReference type="InterPro" id="IPR000923">
    <property type="entry name" value="BlueCu_1"/>
</dbReference>
<dbReference type="InterPro" id="IPR028871">
    <property type="entry name" value="BlueCu_1_BS"/>
</dbReference>
<dbReference type="InterPro" id="IPR001235">
    <property type="entry name" value="Copper_blue_Plastocyanin"/>
</dbReference>
<dbReference type="InterPro" id="IPR008972">
    <property type="entry name" value="Cupredoxin"/>
</dbReference>
<dbReference type="InterPro" id="IPR002387">
    <property type="entry name" value="Plastocyanin"/>
</dbReference>
<dbReference type="NCBIfam" id="TIGR02656">
    <property type="entry name" value="cyanin_plasto"/>
    <property type="match status" value="1"/>
</dbReference>
<dbReference type="PANTHER" id="PTHR34192">
    <property type="entry name" value="PLASTOCYANIN MAJOR ISOFORM, CHLOROPLASTIC-RELATED"/>
    <property type="match status" value="1"/>
</dbReference>
<dbReference type="PANTHER" id="PTHR34192:SF10">
    <property type="entry name" value="PLASTOCYANIN MAJOR ISOFORM, CHLOROPLASTIC-RELATED"/>
    <property type="match status" value="1"/>
</dbReference>
<dbReference type="Pfam" id="PF00127">
    <property type="entry name" value="Copper-bind"/>
    <property type="match status" value="1"/>
</dbReference>
<dbReference type="PRINTS" id="PR00156">
    <property type="entry name" value="COPPERBLUE"/>
</dbReference>
<dbReference type="PRINTS" id="PR00157">
    <property type="entry name" value="PLASTOCYANIN"/>
</dbReference>
<dbReference type="SUPFAM" id="SSF49503">
    <property type="entry name" value="Cupredoxins"/>
    <property type="match status" value="1"/>
</dbReference>
<dbReference type="PROSITE" id="PS00196">
    <property type="entry name" value="COPPER_BLUE"/>
    <property type="match status" value="1"/>
</dbReference>
<sequence length="168" mass="17158">MASVAAAAVSVPSFSGLKAETKAAPARLSSTSVVRMAPVVRASASSDALKTVGKALLAASSSLLLVASANAATVKMGGDDGALGFYPKDISVAAGESVTFVNNKGFPHNVVFDEDAVPAGVKTEDINHEDYLNGPNESFSITFKTPGTYEFYCEPHQGAGMKGVVTVS</sequence>
<keyword id="KW-0150">Chloroplast</keyword>
<keyword id="KW-0186">Copper</keyword>
<keyword id="KW-0249">Electron transport</keyword>
<keyword id="KW-0472">Membrane</keyword>
<keyword id="KW-0479">Metal-binding</keyword>
<keyword id="KW-0934">Plastid</keyword>
<keyword id="KW-1185">Reference proteome</keyword>
<keyword id="KW-0793">Thylakoid</keyword>
<keyword id="KW-0809">Transit peptide</keyword>
<keyword id="KW-0813">Transport</keyword>